<sequence length="116" mass="13376">MTNHKLIEAVTKSQLRTDLPSFRPGDTLRVHVRIIEGTRERIQVFEGIVIKRRGGGVSETFTVRKISSGVGVERTFPLHTPKIEKIEVKRRGKVRRAKLYYLRSLRGKAARIQEIR</sequence>
<evidence type="ECO:0000255" key="1">
    <source>
        <dbReference type="HAMAP-Rule" id="MF_00402"/>
    </source>
</evidence>
<evidence type="ECO:0000305" key="2"/>
<reference key="1">
    <citation type="submission" date="2007-05" db="EMBL/GenBank/DDBJ databases">
        <title>Complete sequence of chromosome of Staphylococcus aureus subsp. aureus JH9.</title>
        <authorList>
            <consortium name="US DOE Joint Genome Institute"/>
            <person name="Copeland A."/>
            <person name="Lucas S."/>
            <person name="Lapidus A."/>
            <person name="Barry K."/>
            <person name="Detter J.C."/>
            <person name="Glavina del Rio T."/>
            <person name="Hammon N."/>
            <person name="Israni S."/>
            <person name="Pitluck S."/>
            <person name="Chain P."/>
            <person name="Malfatti S."/>
            <person name="Shin M."/>
            <person name="Vergez L."/>
            <person name="Schmutz J."/>
            <person name="Larimer F."/>
            <person name="Land M."/>
            <person name="Hauser L."/>
            <person name="Kyrpides N."/>
            <person name="Kim E."/>
            <person name="Tomasz A."/>
            <person name="Richardson P."/>
        </authorList>
    </citation>
    <scope>NUCLEOTIDE SEQUENCE [LARGE SCALE GENOMIC DNA]</scope>
    <source>
        <strain>JH9</strain>
    </source>
</reference>
<dbReference type="EMBL" id="CP000703">
    <property type="protein sequence ID" value="ABQ49099.1"/>
    <property type="molecule type" value="Genomic_DNA"/>
</dbReference>
<dbReference type="RefSeq" id="WP_000181402.1">
    <property type="nucleotide sequence ID" value="NC_009487.1"/>
</dbReference>
<dbReference type="SMR" id="A5ISC6"/>
<dbReference type="KEGG" id="saj:SaurJH9_1300"/>
<dbReference type="HOGENOM" id="CLU_103507_2_1_9"/>
<dbReference type="GO" id="GO:0022625">
    <property type="term" value="C:cytosolic large ribosomal subunit"/>
    <property type="evidence" value="ECO:0007669"/>
    <property type="project" value="TreeGrafter"/>
</dbReference>
<dbReference type="GO" id="GO:0003735">
    <property type="term" value="F:structural constituent of ribosome"/>
    <property type="evidence" value="ECO:0007669"/>
    <property type="project" value="InterPro"/>
</dbReference>
<dbReference type="GO" id="GO:0006412">
    <property type="term" value="P:translation"/>
    <property type="evidence" value="ECO:0007669"/>
    <property type="project" value="UniProtKB-UniRule"/>
</dbReference>
<dbReference type="FunFam" id="2.30.30.790:FF:000001">
    <property type="entry name" value="50S ribosomal protein L19"/>
    <property type="match status" value="1"/>
</dbReference>
<dbReference type="Gene3D" id="2.30.30.790">
    <property type="match status" value="1"/>
</dbReference>
<dbReference type="HAMAP" id="MF_00402">
    <property type="entry name" value="Ribosomal_bL19"/>
    <property type="match status" value="1"/>
</dbReference>
<dbReference type="InterPro" id="IPR001857">
    <property type="entry name" value="Ribosomal_bL19"/>
</dbReference>
<dbReference type="InterPro" id="IPR018257">
    <property type="entry name" value="Ribosomal_bL19_CS"/>
</dbReference>
<dbReference type="InterPro" id="IPR038657">
    <property type="entry name" value="Ribosomal_bL19_sf"/>
</dbReference>
<dbReference type="InterPro" id="IPR008991">
    <property type="entry name" value="Translation_prot_SH3-like_sf"/>
</dbReference>
<dbReference type="NCBIfam" id="TIGR01024">
    <property type="entry name" value="rplS_bact"/>
    <property type="match status" value="1"/>
</dbReference>
<dbReference type="PANTHER" id="PTHR15680:SF9">
    <property type="entry name" value="LARGE RIBOSOMAL SUBUNIT PROTEIN BL19M"/>
    <property type="match status" value="1"/>
</dbReference>
<dbReference type="PANTHER" id="PTHR15680">
    <property type="entry name" value="RIBOSOMAL PROTEIN L19"/>
    <property type="match status" value="1"/>
</dbReference>
<dbReference type="Pfam" id="PF01245">
    <property type="entry name" value="Ribosomal_L19"/>
    <property type="match status" value="1"/>
</dbReference>
<dbReference type="PIRSF" id="PIRSF002191">
    <property type="entry name" value="Ribosomal_L19"/>
    <property type="match status" value="1"/>
</dbReference>
<dbReference type="PRINTS" id="PR00061">
    <property type="entry name" value="RIBOSOMALL19"/>
</dbReference>
<dbReference type="SUPFAM" id="SSF50104">
    <property type="entry name" value="Translation proteins SH3-like domain"/>
    <property type="match status" value="1"/>
</dbReference>
<dbReference type="PROSITE" id="PS01015">
    <property type="entry name" value="RIBOSOMAL_L19"/>
    <property type="match status" value="1"/>
</dbReference>
<gene>
    <name evidence="1" type="primary">rplS</name>
    <name type="ordered locus">SaurJH9_1300</name>
</gene>
<proteinExistence type="inferred from homology"/>
<feature type="chain" id="PRO_1000080376" description="Large ribosomal subunit protein bL19">
    <location>
        <begin position="1"/>
        <end position="116"/>
    </location>
</feature>
<comment type="function">
    <text evidence="1">This protein is located at the 30S-50S ribosomal subunit interface and may play a role in the structure and function of the aminoacyl-tRNA binding site.</text>
</comment>
<comment type="similarity">
    <text evidence="1">Belongs to the bacterial ribosomal protein bL19 family.</text>
</comment>
<protein>
    <recommendedName>
        <fullName evidence="1">Large ribosomal subunit protein bL19</fullName>
    </recommendedName>
    <alternativeName>
        <fullName evidence="2">50S ribosomal protein L19</fullName>
    </alternativeName>
</protein>
<keyword id="KW-0687">Ribonucleoprotein</keyword>
<keyword id="KW-0689">Ribosomal protein</keyword>
<organism>
    <name type="scientific">Staphylococcus aureus (strain JH9)</name>
    <dbReference type="NCBI Taxonomy" id="359786"/>
    <lineage>
        <taxon>Bacteria</taxon>
        <taxon>Bacillati</taxon>
        <taxon>Bacillota</taxon>
        <taxon>Bacilli</taxon>
        <taxon>Bacillales</taxon>
        <taxon>Staphylococcaceae</taxon>
        <taxon>Staphylococcus</taxon>
    </lineage>
</organism>
<name>RL19_STAA9</name>
<accession>A5ISC6</accession>